<name>SYY_BIFLO</name>
<comment type="function">
    <text evidence="1">Catalyzes the attachment of tyrosine to tRNA(Tyr) in a two-step reaction: tyrosine is first activated by ATP to form Tyr-AMP and then transferred to the acceptor end of tRNA(Tyr).</text>
</comment>
<comment type="catalytic activity">
    <reaction evidence="1">
        <text>tRNA(Tyr) + L-tyrosine + ATP = L-tyrosyl-tRNA(Tyr) + AMP + diphosphate + H(+)</text>
        <dbReference type="Rhea" id="RHEA:10220"/>
        <dbReference type="Rhea" id="RHEA-COMP:9706"/>
        <dbReference type="Rhea" id="RHEA-COMP:9707"/>
        <dbReference type="ChEBI" id="CHEBI:15378"/>
        <dbReference type="ChEBI" id="CHEBI:30616"/>
        <dbReference type="ChEBI" id="CHEBI:33019"/>
        <dbReference type="ChEBI" id="CHEBI:58315"/>
        <dbReference type="ChEBI" id="CHEBI:78442"/>
        <dbReference type="ChEBI" id="CHEBI:78536"/>
        <dbReference type="ChEBI" id="CHEBI:456215"/>
        <dbReference type="EC" id="6.1.1.1"/>
    </reaction>
</comment>
<comment type="subunit">
    <text evidence="1">Homodimer.</text>
</comment>
<comment type="subcellular location">
    <subcellularLocation>
        <location evidence="1">Cytoplasm</location>
    </subcellularLocation>
</comment>
<comment type="similarity">
    <text evidence="1">Belongs to the class-I aminoacyl-tRNA synthetase family. TyrS type 1 subfamily.</text>
</comment>
<gene>
    <name evidence="1" type="primary">tyrS</name>
    <name type="ordered locus">BL1051</name>
</gene>
<proteinExistence type="inferred from homology"/>
<organism>
    <name type="scientific">Bifidobacterium longum (strain NCC 2705)</name>
    <dbReference type="NCBI Taxonomy" id="206672"/>
    <lineage>
        <taxon>Bacteria</taxon>
        <taxon>Bacillati</taxon>
        <taxon>Actinomycetota</taxon>
        <taxon>Actinomycetes</taxon>
        <taxon>Bifidobacteriales</taxon>
        <taxon>Bifidobacteriaceae</taxon>
        <taxon>Bifidobacterium</taxon>
    </lineage>
</organism>
<reference key="1">
    <citation type="journal article" date="2002" name="Proc. Natl. Acad. Sci. U.S.A.">
        <title>The genome sequence of Bifidobacterium longum reflects its adaptation to the human gastrointestinal tract.</title>
        <authorList>
            <person name="Schell M.A."/>
            <person name="Karmirantzou M."/>
            <person name="Snel B."/>
            <person name="Vilanova D."/>
            <person name="Berger B."/>
            <person name="Pessi G."/>
            <person name="Zwahlen M.-C."/>
            <person name="Desiere F."/>
            <person name="Bork P."/>
            <person name="Delley M."/>
            <person name="Pridmore R.D."/>
            <person name="Arigoni F."/>
        </authorList>
    </citation>
    <scope>NUCLEOTIDE SEQUENCE [LARGE SCALE GENOMIC DNA]</scope>
    <source>
        <strain>NCC 2705</strain>
    </source>
</reference>
<keyword id="KW-0030">Aminoacyl-tRNA synthetase</keyword>
<keyword id="KW-0067">ATP-binding</keyword>
<keyword id="KW-0963">Cytoplasm</keyword>
<keyword id="KW-0436">Ligase</keyword>
<keyword id="KW-0547">Nucleotide-binding</keyword>
<keyword id="KW-0648">Protein biosynthesis</keyword>
<keyword id="KW-1185">Reference proteome</keyword>
<keyword id="KW-0694">RNA-binding</keyword>
<accession>Q8G5G1</accession>
<protein>
    <recommendedName>
        <fullName evidence="1">Tyrosine--tRNA ligase</fullName>
        <ecNumber evidence="1">6.1.1.1</ecNumber>
    </recommendedName>
    <alternativeName>
        <fullName evidence="1">Tyrosyl-tRNA synthetase</fullName>
        <shortName evidence="1">TyrRS</shortName>
    </alternativeName>
</protein>
<dbReference type="EC" id="6.1.1.1" evidence="1"/>
<dbReference type="EMBL" id="AE014295">
    <property type="protein sequence ID" value="AAN24857.1"/>
    <property type="molecule type" value="Genomic_DNA"/>
</dbReference>
<dbReference type="RefSeq" id="NP_696221.1">
    <property type="nucleotide sequence ID" value="NC_004307.2"/>
</dbReference>
<dbReference type="RefSeq" id="WP_011068272.1">
    <property type="nucleotide sequence ID" value="NC_004307.2"/>
</dbReference>
<dbReference type="SMR" id="Q8G5G1"/>
<dbReference type="STRING" id="206672.BL1051"/>
<dbReference type="EnsemblBacteria" id="AAN24857">
    <property type="protein sequence ID" value="AAN24857"/>
    <property type="gene ID" value="BL1051"/>
</dbReference>
<dbReference type="KEGG" id="blo:BL1051"/>
<dbReference type="PATRIC" id="fig|206672.9.peg.756"/>
<dbReference type="HOGENOM" id="CLU_024003_0_3_11"/>
<dbReference type="OrthoDB" id="9804243at2"/>
<dbReference type="PhylomeDB" id="Q8G5G1"/>
<dbReference type="Proteomes" id="UP000000439">
    <property type="component" value="Chromosome"/>
</dbReference>
<dbReference type="GO" id="GO:0005829">
    <property type="term" value="C:cytosol"/>
    <property type="evidence" value="ECO:0007669"/>
    <property type="project" value="TreeGrafter"/>
</dbReference>
<dbReference type="GO" id="GO:0005524">
    <property type="term" value="F:ATP binding"/>
    <property type="evidence" value="ECO:0007669"/>
    <property type="project" value="UniProtKB-UniRule"/>
</dbReference>
<dbReference type="GO" id="GO:0003723">
    <property type="term" value="F:RNA binding"/>
    <property type="evidence" value="ECO:0007669"/>
    <property type="project" value="UniProtKB-KW"/>
</dbReference>
<dbReference type="GO" id="GO:0004831">
    <property type="term" value="F:tyrosine-tRNA ligase activity"/>
    <property type="evidence" value="ECO:0007669"/>
    <property type="project" value="UniProtKB-UniRule"/>
</dbReference>
<dbReference type="GO" id="GO:0006437">
    <property type="term" value="P:tyrosyl-tRNA aminoacylation"/>
    <property type="evidence" value="ECO:0007669"/>
    <property type="project" value="UniProtKB-UniRule"/>
</dbReference>
<dbReference type="CDD" id="cd00165">
    <property type="entry name" value="S4"/>
    <property type="match status" value="1"/>
</dbReference>
<dbReference type="CDD" id="cd00805">
    <property type="entry name" value="TyrRS_core"/>
    <property type="match status" value="1"/>
</dbReference>
<dbReference type="FunFam" id="1.10.240.10:FF:000001">
    <property type="entry name" value="Tyrosine--tRNA ligase"/>
    <property type="match status" value="1"/>
</dbReference>
<dbReference type="Gene3D" id="3.40.50.620">
    <property type="entry name" value="HUPs"/>
    <property type="match status" value="1"/>
</dbReference>
<dbReference type="Gene3D" id="3.10.290.10">
    <property type="entry name" value="RNA-binding S4 domain"/>
    <property type="match status" value="1"/>
</dbReference>
<dbReference type="Gene3D" id="1.10.240.10">
    <property type="entry name" value="Tyrosyl-Transfer RNA Synthetase"/>
    <property type="match status" value="1"/>
</dbReference>
<dbReference type="HAMAP" id="MF_02006">
    <property type="entry name" value="Tyr_tRNA_synth_type1"/>
    <property type="match status" value="1"/>
</dbReference>
<dbReference type="InterPro" id="IPR001412">
    <property type="entry name" value="aa-tRNA-synth_I_CS"/>
</dbReference>
<dbReference type="InterPro" id="IPR002305">
    <property type="entry name" value="aa-tRNA-synth_Ic"/>
</dbReference>
<dbReference type="InterPro" id="IPR014729">
    <property type="entry name" value="Rossmann-like_a/b/a_fold"/>
</dbReference>
<dbReference type="InterPro" id="IPR036986">
    <property type="entry name" value="S4_RNA-bd_sf"/>
</dbReference>
<dbReference type="InterPro" id="IPR054608">
    <property type="entry name" value="SYY-like_C"/>
</dbReference>
<dbReference type="InterPro" id="IPR002307">
    <property type="entry name" value="Tyr-tRNA-ligase"/>
</dbReference>
<dbReference type="InterPro" id="IPR024088">
    <property type="entry name" value="Tyr-tRNA-ligase_bac-type"/>
</dbReference>
<dbReference type="InterPro" id="IPR024107">
    <property type="entry name" value="Tyr-tRNA-ligase_bac_1"/>
</dbReference>
<dbReference type="NCBIfam" id="TIGR00234">
    <property type="entry name" value="tyrS"/>
    <property type="match status" value="1"/>
</dbReference>
<dbReference type="PANTHER" id="PTHR11766:SF0">
    <property type="entry name" value="TYROSINE--TRNA LIGASE, MITOCHONDRIAL"/>
    <property type="match status" value="1"/>
</dbReference>
<dbReference type="PANTHER" id="PTHR11766">
    <property type="entry name" value="TYROSYL-TRNA SYNTHETASE"/>
    <property type="match status" value="1"/>
</dbReference>
<dbReference type="Pfam" id="PF22421">
    <property type="entry name" value="SYY_C-terminal"/>
    <property type="match status" value="1"/>
</dbReference>
<dbReference type="Pfam" id="PF00579">
    <property type="entry name" value="tRNA-synt_1b"/>
    <property type="match status" value="1"/>
</dbReference>
<dbReference type="PRINTS" id="PR01040">
    <property type="entry name" value="TRNASYNTHTYR"/>
</dbReference>
<dbReference type="SUPFAM" id="SSF55174">
    <property type="entry name" value="Alpha-L RNA-binding motif"/>
    <property type="match status" value="1"/>
</dbReference>
<dbReference type="SUPFAM" id="SSF52374">
    <property type="entry name" value="Nucleotidylyl transferase"/>
    <property type="match status" value="1"/>
</dbReference>
<dbReference type="PROSITE" id="PS00178">
    <property type="entry name" value="AA_TRNA_LIGASE_I"/>
    <property type="match status" value="1"/>
</dbReference>
<dbReference type="PROSITE" id="PS50889">
    <property type="entry name" value="S4"/>
    <property type="match status" value="1"/>
</dbReference>
<sequence>MAHVTDFKEAGFNTLLEELEWRGLISQSTDRDRLAEALNGEPITYYCGFDPTAASLHIGNLVQLINMRHLQLAGHHPIALVGGATGLIGDPRQSGERTLNPKDVVAGWADRLKNQIGGILDTEGANAVRFVSNYDWTASMTVIDFLRDVGKNFRLGTMLAKDTVARRLNSEEGISFTEFSYQVLQGNDFLHLFDEYHCTLELGGSDQWGNLTSGLDLIHKVRGVDVNVFTSPIITDASGKKFGKSEGNAVWLDATMLSPYKFYQFWINRPDVEMESLLKAFTFLPKAEIERLVEESKTNPGKREAQKTLAWEVTSFVHGEAATQAAIDASGALFGRGGNLEDIDEEMLESVLDGFKVVDENGEHVFPVSKPGDRVIDAAQAAGLFKSASEARRAIKSGGVYLNNNRIEDEEQVLAEADFLAGRFALIRRGKKALGAVENR</sequence>
<evidence type="ECO:0000255" key="1">
    <source>
        <dbReference type="HAMAP-Rule" id="MF_02006"/>
    </source>
</evidence>
<feature type="chain" id="PRO_0000234683" description="Tyrosine--tRNA ligase">
    <location>
        <begin position="1"/>
        <end position="440"/>
    </location>
</feature>
<feature type="domain" description="S4 RNA-binding" evidence="1">
    <location>
        <begin position="373"/>
        <end position="439"/>
    </location>
</feature>
<feature type="short sequence motif" description="'HIGH' region">
    <location>
        <begin position="51"/>
        <end position="60"/>
    </location>
</feature>
<feature type="short sequence motif" description="'KMSKS' region">
    <location>
        <begin position="241"/>
        <end position="245"/>
    </location>
</feature>
<feature type="binding site" evidence="1">
    <location>
        <position position="46"/>
    </location>
    <ligand>
        <name>L-tyrosine</name>
        <dbReference type="ChEBI" id="CHEBI:58315"/>
    </ligand>
</feature>
<feature type="binding site" evidence="1">
    <location>
        <position position="181"/>
    </location>
    <ligand>
        <name>L-tyrosine</name>
        <dbReference type="ChEBI" id="CHEBI:58315"/>
    </ligand>
</feature>
<feature type="binding site" evidence="1">
    <location>
        <position position="185"/>
    </location>
    <ligand>
        <name>L-tyrosine</name>
        <dbReference type="ChEBI" id="CHEBI:58315"/>
    </ligand>
</feature>
<feature type="binding site" evidence="1">
    <location>
        <position position="244"/>
    </location>
    <ligand>
        <name>ATP</name>
        <dbReference type="ChEBI" id="CHEBI:30616"/>
    </ligand>
</feature>